<dbReference type="SMR" id="P56743"/>
<dbReference type="GlyConnect" id="434">
    <property type="glycosylation" value="9 N-Linked glycans (1 site)"/>
</dbReference>
<dbReference type="GO" id="GO:0005576">
    <property type="term" value="C:extracellular region"/>
    <property type="evidence" value="ECO:0007669"/>
    <property type="project" value="UniProtKB-SubCell"/>
</dbReference>
<dbReference type="GO" id="GO:0019871">
    <property type="term" value="F:sodium channel inhibitor activity"/>
    <property type="evidence" value="ECO:0007669"/>
    <property type="project" value="InterPro"/>
</dbReference>
<dbReference type="GO" id="GO:0090729">
    <property type="term" value="F:toxin activity"/>
    <property type="evidence" value="ECO:0007669"/>
    <property type="project" value="UniProtKB-KW"/>
</dbReference>
<dbReference type="GO" id="GO:0006952">
    <property type="term" value="P:defense response"/>
    <property type="evidence" value="ECO:0007669"/>
    <property type="project" value="InterPro"/>
</dbReference>
<dbReference type="CDD" id="cd23106">
    <property type="entry name" value="neurotoxins_LC_scorpion"/>
    <property type="match status" value="1"/>
</dbReference>
<dbReference type="Gene3D" id="3.30.30.10">
    <property type="entry name" value="Knottin, scorpion toxin-like"/>
    <property type="match status" value="1"/>
</dbReference>
<dbReference type="InterPro" id="IPR044062">
    <property type="entry name" value="LCN-type_CS_alpha_beta_dom"/>
</dbReference>
<dbReference type="InterPro" id="IPR003614">
    <property type="entry name" value="Scorpion_toxin-like"/>
</dbReference>
<dbReference type="InterPro" id="IPR036574">
    <property type="entry name" value="Scorpion_toxin-like_sf"/>
</dbReference>
<dbReference type="InterPro" id="IPR018218">
    <property type="entry name" value="Scorpion_toxinL"/>
</dbReference>
<dbReference type="InterPro" id="IPR002061">
    <property type="entry name" value="Scorpion_toxinL/defensin"/>
</dbReference>
<dbReference type="Pfam" id="PF00537">
    <property type="entry name" value="Toxin_3"/>
    <property type="match status" value="1"/>
</dbReference>
<dbReference type="PRINTS" id="PR00285">
    <property type="entry name" value="SCORPNTOXIN"/>
</dbReference>
<dbReference type="SMART" id="SM00505">
    <property type="entry name" value="Knot1"/>
    <property type="match status" value="1"/>
</dbReference>
<dbReference type="SUPFAM" id="SSF57095">
    <property type="entry name" value="Scorpion toxin-like"/>
    <property type="match status" value="1"/>
</dbReference>
<dbReference type="PROSITE" id="PS51863">
    <property type="entry name" value="LCN_CSAB"/>
    <property type="match status" value="1"/>
</dbReference>
<sequence>GRDGYVVKNGTNCKYSCEIGSEYEYCGPLCKRKNAKTGYCYAFACWCIDVPDDVKLYGDDGTYCSS</sequence>
<reference key="1">
    <citation type="journal article" date="1999" name="FEBS Lett.">
        <title>Aah VI, a novel, N-glycosylated anti-insect toxin from Androctonus australis hector scorpion venom: isolation, characterisation, and glycan structure determination.</title>
        <authorList>
            <person name="Hassani O."/>
            <person name="Loew D."/>
            <person name="van Dorsselaer A."/>
            <person name="Papandreou M.J."/>
            <person name="Sorokine O."/>
            <person name="Rochat H."/>
            <person name="Sampieri F."/>
            <person name="Mansuelle P."/>
        </authorList>
    </citation>
    <scope>PROTEIN SEQUENCE</scope>
    <scope>TOXIC DOSE</scope>
    <scope>GLYCOSYLATION AT ASN-9</scope>
    <scope>STRUCTURE OF CARBOHYDRATE</scope>
    <source>
        <strain>Hector</strain>
        <tissue>Venom</tissue>
    </source>
</reference>
<evidence type="ECO:0000250" key="1"/>
<evidence type="ECO:0000255" key="2">
    <source>
        <dbReference type="PROSITE-ProRule" id="PRU01210"/>
    </source>
</evidence>
<evidence type="ECO:0000269" key="3">
    <source>
    </source>
</evidence>
<evidence type="ECO:0000305" key="4"/>
<organism>
    <name type="scientific">Androctonus australis</name>
    <name type="common">Sahara scorpion</name>
    <dbReference type="NCBI Taxonomy" id="6858"/>
    <lineage>
        <taxon>Eukaryota</taxon>
        <taxon>Metazoa</taxon>
        <taxon>Ecdysozoa</taxon>
        <taxon>Arthropoda</taxon>
        <taxon>Chelicerata</taxon>
        <taxon>Arachnida</taxon>
        <taxon>Scorpiones</taxon>
        <taxon>Buthida</taxon>
        <taxon>Buthoidea</taxon>
        <taxon>Buthidae</taxon>
        <taxon>Androctonus</taxon>
    </lineage>
</organism>
<name>SCX6_ANDAU</name>
<feature type="chain" id="PRO_0000066724" description="Toxin Aah6">
    <location>
        <begin position="1"/>
        <end position="66"/>
    </location>
</feature>
<feature type="domain" description="LCN-type CS-alpha/beta" evidence="2">
    <location>
        <begin position="2"/>
        <end position="65"/>
    </location>
</feature>
<feature type="glycosylation site" id="CAR_000157" description="N-linked (GlcNAc...) asparagine" evidence="3">
    <location>
        <position position="9"/>
    </location>
</feature>
<feature type="disulfide bond" evidence="2">
    <location>
        <begin position="13"/>
        <end position="64"/>
    </location>
</feature>
<feature type="disulfide bond" evidence="2">
    <location>
        <begin position="17"/>
        <end position="40"/>
    </location>
</feature>
<feature type="disulfide bond" evidence="2">
    <location>
        <begin position="26"/>
        <end position="45"/>
    </location>
</feature>
<feature type="disulfide bond" evidence="2">
    <location>
        <begin position="30"/>
        <end position="47"/>
    </location>
</feature>
<proteinExistence type="evidence at protein level"/>
<comment type="function">
    <text evidence="1">Beta toxins bind voltage-independently at site-4 of sodium channels and shift the voltage of activation toward more negative potentials thereby affecting sodium channel activation and promoting spontaneous and repetitive firing. This toxin is active only on insects (By similarity). This toxin has very low anti-insect activity.</text>
</comment>
<comment type="subcellular location">
    <subcellularLocation>
        <location>Secreted</location>
    </subcellularLocation>
</comment>
<comment type="tissue specificity">
    <text>Expressed by the venom gland.</text>
</comment>
<comment type="domain">
    <text evidence="4">Has the structural arrangement of an alpha-helix connected to antiparallel beta-sheets by disulfide bonds (CS-alpha/beta).</text>
</comment>
<comment type="PTM">
    <text>N-glycans are core-fucosylated, heterogeneous and short which could be the result of extensive trimming.</text>
</comment>
<comment type="toxic dose">
    <text evidence="3">LD(50) is 8.5 ug/g in Blattella germanica.</text>
</comment>
<comment type="similarity">
    <text evidence="4">Belongs to the long (4 C-C) scorpion toxin superfamily. Sodium channel inhibitor family. Beta subfamily.</text>
</comment>
<protein>
    <recommendedName>
        <fullName>Toxin Aah6</fullName>
    </recommendedName>
    <alternativeName>
        <fullName>AaH VI</fullName>
        <shortName>AaHVI</shortName>
    </alternativeName>
    <alternativeName>
        <fullName>Neurotoxin 6</fullName>
    </alternativeName>
    <alternativeName>
        <fullName>Neurotoxin VI</fullName>
    </alternativeName>
</protein>
<keyword id="KW-0903">Direct protein sequencing</keyword>
<keyword id="KW-1015">Disulfide bond</keyword>
<keyword id="KW-0325">Glycoprotein</keyword>
<keyword id="KW-0964">Secreted</keyword>
<keyword id="KW-0800">Toxin</keyword>
<accession>P56743</accession>